<evidence type="ECO:0000255" key="1">
    <source>
        <dbReference type="HAMAP-Rule" id="MF_02042"/>
    </source>
</evidence>
<evidence type="ECO:0000305" key="2"/>
<name>DUSB_PASMU</name>
<reference key="1">
    <citation type="journal article" date="2001" name="Proc. Natl. Acad. Sci. U.S.A.">
        <title>Complete genomic sequence of Pasteurella multocida Pm70.</title>
        <authorList>
            <person name="May B.J."/>
            <person name="Zhang Q."/>
            <person name="Li L.L."/>
            <person name="Paustian M.L."/>
            <person name="Whittam T.S."/>
            <person name="Kapur V."/>
        </authorList>
    </citation>
    <scope>NUCLEOTIDE SEQUENCE [LARGE SCALE GENOMIC DNA]</scope>
    <source>
        <strain>Pm70</strain>
    </source>
</reference>
<keyword id="KW-0285">Flavoprotein</keyword>
<keyword id="KW-0288">FMN</keyword>
<keyword id="KW-0521">NADP</keyword>
<keyword id="KW-0560">Oxidoreductase</keyword>
<keyword id="KW-1185">Reference proteome</keyword>
<keyword id="KW-0694">RNA-binding</keyword>
<keyword id="KW-0819">tRNA processing</keyword>
<keyword id="KW-0820">tRNA-binding</keyword>
<proteinExistence type="inferred from homology"/>
<dbReference type="EC" id="1.3.1.-" evidence="1"/>
<dbReference type="EMBL" id="AE004439">
    <property type="protein sequence ID" value="AAK03171.1"/>
    <property type="status" value="ALT_INIT"/>
    <property type="molecule type" value="Genomic_DNA"/>
</dbReference>
<dbReference type="SMR" id="Q9CLW3"/>
<dbReference type="STRING" id="272843.PM1087"/>
<dbReference type="EnsemblBacteria" id="AAK03171">
    <property type="protein sequence ID" value="AAK03171"/>
    <property type="gene ID" value="PM1087"/>
</dbReference>
<dbReference type="KEGG" id="pmu:PM1087"/>
<dbReference type="HOGENOM" id="CLU_013299_0_1_6"/>
<dbReference type="Proteomes" id="UP000000809">
    <property type="component" value="Chromosome"/>
</dbReference>
<dbReference type="GO" id="GO:0050660">
    <property type="term" value="F:flavin adenine dinucleotide binding"/>
    <property type="evidence" value="ECO:0007669"/>
    <property type="project" value="InterPro"/>
</dbReference>
<dbReference type="GO" id="GO:0010181">
    <property type="term" value="F:FMN binding"/>
    <property type="evidence" value="ECO:0007669"/>
    <property type="project" value="UniProtKB-UniRule"/>
</dbReference>
<dbReference type="GO" id="GO:0000049">
    <property type="term" value="F:tRNA binding"/>
    <property type="evidence" value="ECO:0007669"/>
    <property type="project" value="UniProtKB-UniRule"/>
</dbReference>
<dbReference type="GO" id="GO:0017150">
    <property type="term" value="F:tRNA dihydrouridine synthase activity"/>
    <property type="evidence" value="ECO:0007669"/>
    <property type="project" value="UniProtKB-UniRule"/>
</dbReference>
<dbReference type="CDD" id="cd02801">
    <property type="entry name" value="DUS_like_FMN"/>
    <property type="match status" value="1"/>
</dbReference>
<dbReference type="Gene3D" id="3.20.20.70">
    <property type="entry name" value="Aldolase class I"/>
    <property type="match status" value="1"/>
</dbReference>
<dbReference type="Gene3D" id="1.10.1200.80">
    <property type="entry name" value="Putative flavin oxidoreducatase, domain 2"/>
    <property type="match status" value="1"/>
</dbReference>
<dbReference type="HAMAP" id="MF_02042">
    <property type="entry name" value="DusB_subfam"/>
    <property type="match status" value="1"/>
</dbReference>
<dbReference type="InterPro" id="IPR013785">
    <property type="entry name" value="Aldolase_TIM"/>
</dbReference>
<dbReference type="InterPro" id="IPR035587">
    <property type="entry name" value="DUS-like_FMN-bd"/>
</dbReference>
<dbReference type="InterPro" id="IPR001269">
    <property type="entry name" value="DUS_fam"/>
</dbReference>
<dbReference type="InterPro" id="IPR032887">
    <property type="entry name" value="DusB"/>
</dbReference>
<dbReference type="InterPro" id="IPR004652">
    <property type="entry name" value="DusB-like"/>
</dbReference>
<dbReference type="InterPro" id="IPR024036">
    <property type="entry name" value="tRNA-dHydroUridine_Synthase_C"/>
</dbReference>
<dbReference type="InterPro" id="IPR018517">
    <property type="entry name" value="tRNA_hU_synthase_CS"/>
</dbReference>
<dbReference type="NCBIfam" id="TIGR00737">
    <property type="entry name" value="nifR3_yhdG"/>
    <property type="match status" value="1"/>
</dbReference>
<dbReference type="PANTHER" id="PTHR45846">
    <property type="entry name" value="TRNA-DIHYDROURIDINE(47) SYNTHASE [NAD(P)(+)]-LIKE"/>
    <property type="match status" value="1"/>
</dbReference>
<dbReference type="PANTHER" id="PTHR45846:SF1">
    <property type="entry name" value="TRNA-DIHYDROURIDINE(47) SYNTHASE [NAD(P)(+)]-LIKE"/>
    <property type="match status" value="1"/>
</dbReference>
<dbReference type="Pfam" id="PF01207">
    <property type="entry name" value="Dus"/>
    <property type="match status" value="1"/>
</dbReference>
<dbReference type="PIRSF" id="PIRSF006621">
    <property type="entry name" value="Dus"/>
    <property type="match status" value="1"/>
</dbReference>
<dbReference type="SUPFAM" id="SSF51395">
    <property type="entry name" value="FMN-linked oxidoreductases"/>
    <property type="match status" value="1"/>
</dbReference>
<dbReference type="PROSITE" id="PS01136">
    <property type="entry name" value="UPF0034"/>
    <property type="match status" value="1"/>
</dbReference>
<comment type="function">
    <text evidence="1">Catalyzes the synthesis of 5,6-dihydrouridine (D), a modified base found in the D-loop of most tRNAs, via the reduction of the C5-C6 double bond in target uridines.</text>
</comment>
<comment type="catalytic activity">
    <reaction evidence="1">
        <text>a 5,6-dihydrouridine in tRNA + NAD(+) = a uridine in tRNA + NADH + H(+)</text>
        <dbReference type="Rhea" id="RHEA:54452"/>
        <dbReference type="Rhea" id="RHEA-COMP:13339"/>
        <dbReference type="Rhea" id="RHEA-COMP:13887"/>
        <dbReference type="ChEBI" id="CHEBI:15378"/>
        <dbReference type="ChEBI" id="CHEBI:57540"/>
        <dbReference type="ChEBI" id="CHEBI:57945"/>
        <dbReference type="ChEBI" id="CHEBI:65315"/>
        <dbReference type="ChEBI" id="CHEBI:74443"/>
    </reaction>
</comment>
<comment type="catalytic activity">
    <reaction evidence="1">
        <text>a 5,6-dihydrouridine in tRNA + NADP(+) = a uridine in tRNA + NADPH + H(+)</text>
        <dbReference type="Rhea" id="RHEA:23624"/>
        <dbReference type="Rhea" id="RHEA-COMP:13339"/>
        <dbReference type="Rhea" id="RHEA-COMP:13887"/>
        <dbReference type="ChEBI" id="CHEBI:15378"/>
        <dbReference type="ChEBI" id="CHEBI:57783"/>
        <dbReference type="ChEBI" id="CHEBI:58349"/>
        <dbReference type="ChEBI" id="CHEBI:65315"/>
        <dbReference type="ChEBI" id="CHEBI:74443"/>
    </reaction>
</comment>
<comment type="cofactor">
    <cofactor evidence="1">
        <name>FMN</name>
        <dbReference type="ChEBI" id="CHEBI:58210"/>
    </cofactor>
</comment>
<comment type="similarity">
    <text evidence="1">Belongs to the Dus family. DusB subfamily.</text>
</comment>
<comment type="sequence caution" evidence="2">
    <conflict type="erroneous initiation">
        <sequence resource="EMBL-CDS" id="AAK03171"/>
    </conflict>
</comment>
<sequence>MRIGSYQLKNRIFLAPMAGITDQPFRRICTHYGAGLTFSEMMSTNPQVWHTEKSKLRLAHHQEAGINAVQIAGCDPDEMAKAAQINVEYGAEIIDINMGCPAKKVNRKMAGSALLQYPDLVKQILNKVVKSVTVPVTLKIRTGWDKDNRNCLEIAKIAEQCGIQALTIHGRTRSCMFEGEAEYDNIKAVKEQLSIPIIANGDITSAEKAKYVLDYTNADAIMIGRGSLGNPWLFRVMESLIEKDSIVLEPSLNEKCNVILQHIQELHQFYGVEKGCRIARKHVAWYLQGIQPNPVFRQAFNAITDPKEQLIALEGFFNLILMDKEKNVRTTT</sequence>
<gene>
    <name evidence="1" type="primary">dusB</name>
    <name type="ordered locus">PM1087</name>
</gene>
<organism>
    <name type="scientific">Pasteurella multocida (strain Pm70)</name>
    <dbReference type="NCBI Taxonomy" id="272843"/>
    <lineage>
        <taxon>Bacteria</taxon>
        <taxon>Pseudomonadati</taxon>
        <taxon>Pseudomonadota</taxon>
        <taxon>Gammaproteobacteria</taxon>
        <taxon>Pasteurellales</taxon>
        <taxon>Pasteurellaceae</taxon>
        <taxon>Pasteurella</taxon>
    </lineage>
</organism>
<protein>
    <recommendedName>
        <fullName evidence="1">tRNA-dihydrouridine synthase B</fullName>
        <ecNumber evidence="1">1.3.1.-</ecNumber>
    </recommendedName>
</protein>
<feature type="chain" id="PRO_0000162091" description="tRNA-dihydrouridine synthase B">
    <location>
        <begin position="1"/>
        <end position="332"/>
    </location>
</feature>
<feature type="active site" description="Proton donor" evidence="1">
    <location>
        <position position="100"/>
    </location>
</feature>
<feature type="binding site" evidence="1">
    <location>
        <begin position="16"/>
        <end position="18"/>
    </location>
    <ligand>
        <name>FMN</name>
        <dbReference type="ChEBI" id="CHEBI:58210"/>
    </ligand>
</feature>
<feature type="binding site" evidence="1">
    <location>
        <position position="70"/>
    </location>
    <ligand>
        <name>FMN</name>
        <dbReference type="ChEBI" id="CHEBI:58210"/>
    </ligand>
</feature>
<feature type="binding site" evidence="1">
    <location>
        <position position="139"/>
    </location>
    <ligand>
        <name>FMN</name>
        <dbReference type="ChEBI" id="CHEBI:58210"/>
    </ligand>
</feature>
<feature type="binding site" evidence="1">
    <location>
        <begin position="200"/>
        <end position="202"/>
    </location>
    <ligand>
        <name>FMN</name>
        <dbReference type="ChEBI" id="CHEBI:58210"/>
    </ligand>
</feature>
<feature type="binding site" evidence="1">
    <location>
        <begin position="224"/>
        <end position="225"/>
    </location>
    <ligand>
        <name>FMN</name>
        <dbReference type="ChEBI" id="CHEBI:58210"/>
    </ligand>
</feature>
<accession>Q9CLW3</accession>